<feature type="chain" id="PRO_0000096927" description="Prophage DNA-packing protein NohA">
    <location>
        <begin position="1"/>
        <end position="189"/>
    </location>
</feature>
<evidence type="ECO:0000269" key="1">
    <source>
    </source>
</evidence>
<evidence type="ECO:0000305" key="2"/>
<sequence>MEVNKKQLADIFGASIRTIQNWQEQGMPVLRGGGKGNEVLYDSAAVIRWYAERDAEIENEKLRREVEELRQASETDLQPGTIEYERHRLTRAQADAQELKNARDSAEVVETAFCTFVLSRIAGEIASILDGIPLSVQRRFPELENRHVDFLKRDIIKAMNKAAALDELIPGLLSEYNRADRQYAGGSRS</sequence>
<reference key="1">
    <citation type="journal article" date="1996" name="DNA Res.">
        <title>A 570-kb DNA sequence of the Escherichia coli K-12 genome corresponding to the 28.0-40.1 min region on the linkage map.</title>
        <authorList>
            <person name="Aiba H."/>
            <person name="Baba T."/>
            <person name="Fujita K."/>
            <person name="Hayashi K."/>
            <person name="Inada T."/>
            <person name="Isono K."/>
            <person name="Itoh T."/>
            <person name="Kasai H."/>
            <person name="Kashimoto K."/>
            <person name="Kimura S."/>
            <person name="Kitakawa M."/>
            <person name="Kitagawa M."/>
            <person name="Makino K."/>
            <person name="Miki T."/>
            <person name="Mizobuchi K."/>
            <person name="Mori H."/>
            <person name="Mori T."/>
            <person name="Motomura K."/>
            <person name="Nakade S."/>
            <person name="Nakamura Y."/>
            <person name="Nashimoto H."/>
            <person name="Nishio Y."/>
            <person name="Oshima T."/>
            <person name="Saito N."/>
            <person name="Sampei G."/>
            <person name="Seki Y."/>
            <person name="Sivasundaram S."/>
            <person name="Tagami H."/>
            <person name="Takeda J."/>
            <person name="Takemoto K."/>
            <person name="Takeuchi Y."/>
            <person name="Wada C."/>
            <person name="Yamamoto Y."/>
            <person name="Horiuchi T."/>
        </authorList>
    </citation>
    <scope>NUCLEOTIDE SEQUENCE [LARGE SCALE GENOMIC DNA]</scope>
    <source>
        <strain>K12 / W3110 / ATCC 27325 / DSM 5911</strain>
    </source>
</reference>
<reference key="2">
    <citation type="journal article" date="1997" name="Science">
        <title>The complete genome sequence of Escherichia coli K-12.</title>
        <authorList>
            <person name="Blattner F.R."/>
            <person name="Plunkett G. III"/>
            <person name="Bloch C.A."/>
            <person name="Perna N.T."/>
            <person name="Burland V."/>
            <person name="Riley M."/>
            <person name="Collado-Vides J."/>
            <person name="Glasner J.D."/>
            <person name="Rode C.K."/>
            <person name="Mayhew G.F."/>
            <person name="Gregor J."/>
            <person name="Davis N.W."/>
            <person name="Kirkpatrick H.A."/>
            <person name="Goeden M.A."/>
            <person name="Rose D.J."/>
            <person name="Mau B."/>
            <person name="Shao Y."/>
        </authorList>
    </citation>
    <scope>NUCLEOTIDE SEQUENCE [LARGE SCALE GENOMIC DNA]</scope>
    <source>
        <strain>K12 / MG1655 / ATCC 47076</strain>
    </source>
</reference>
<reference key="3">
    <citation type="journal article" date="2006" name="Mol. Syst. Biol.">
        <title>Highly accurate genome sequences of Escherichia coli K-12 strains MG1655 and W3110.</title>
        <authorList>
            <person name="Hayashi K."/>
            <person name="Morooka N."/>
            <person name="Yamamoto Y."/>
            <person name="Fujita K."/>
            <person name="Isono K."/>
            <person name="Choi S."/>
            <person name="Ohtsubo E."/>
            <person name="Baba T."/>
            <person name="Wanner B.L."/>
            <person name="Mori H."/>
            <person name="Horiuchi T."/>
        </authorList>
    </citation>
    <scope>NUCLEOTIDE SEQUENCE [LARGE SCALE GENOMIC DNA]</scope>
    <source>
        <strain>K12 / W3110 / ATCC 27325 / DSM 5911</strain>
    </source>
</reference>
<reference key="4">
    <citation type="journal article" date="1992" name="Nucleic Acids Res.">
        <title>Site-specific dissection of E. coli chromosome by lambda terminase.</title>
        <authorList>
            <person name="Kotani H."/>
            <person name="Kawamura A."/>
            <person name="Takahashi A."/>
            <person name="Nakatsuji M."/>
            <person name="Hiraoka N."/>
            <person name="Nakajima K."/>
            <person name="Takanami M."/>
        </authorList>
    </citation>
    <scope>NUCLEOTIDE SEQUENCE [GENOMIC DNA] OF 1-147</scope>
    <source>
        <strain>K12 / W3110 / ATCC 27325 / DSM 5911</strain>
    </source>
</reference>
<reference key="5">
    <citation type="journal article" date="2000" name="Microbiology">
        <title>A method for direct cloning of Fur-regulated genes: identification of seven new Fur-regulated loci in Escherichia coli.</title>
        <authorList>
            <person name="Vassinova N."/>
            <person name="Kozyrev D."/>
        </authorList>
    </citation>
    <scope>INDUCTION</scope>
</reference>
<dbReference type="EMBL" id="U00096">
    <property type="protein sequence ID" value="AYC08216.1"/>
    <property type="molecule type" value="Genomic_DNA"/>
</dbReference>
<dbReference type="EMBL" id="AP009048">
    <property type="protein sequence ID" value="BAA15252.1"/>
    <property type="molecule type" value="Genomic_DNA"/>
</dbReference>
<dbReference type="EMBL" id="D00927">
    <property type="status" value="NOT_ANNOTATED_CDS"/>
    <property type="molecule type" value="Genomic_DNA"/>
</dbReference>
<dbReference type="PIR" id="G64909">
    <property type="entry name" value="G64909"/>
</dbReference>
<dbReference type="RefSeq" id="WP_000453612.1">
    <property type="nucleotide sequence ID" value="NZ_CP064683.1"/>
</dbReference>
<dbReference type="BMRB" id="P31061"/>
<dbReference type="SMR" id="P31061"/>
<dbReference type="BioGRID" id="4260236">
    <property type="interactions" value="138"/>
</dbReference>
<dbReference type="DIP" id="DIP-10355N"/>
<dbReference type="FunCoup" id="P31061">
    <property type="interactions" value="88"/>
</dbReference>
<dbReference type="IntAct" id="P31061">
    <property type="interactions" value="7"/>
</dbReference>
<dbReference type="EnsemblBacteria" id="AYC08216">
    <property type="protein sequence ID" value="AYC08216"/>
    <property type="gene ID" value="b1548"/>
</dbReference>
<dbReference type="KEGG" id="ecj:JW1541"/>
<dbReference type="KEGG" id="ecoc:C3026_08935"/>
<dbReference type="PATRIC" id="fig|83333.103.peg.2380"/>
<dbReference type="EchoBASE" id="EB1590"/>
<dbReference type="eggNOG" id="COG4220">
    <property type="taxonomic scope" value="Bacteria"/>
</dbReference>
<dbReference type="HOGENOM" id="CLU_101608_0_1_6"/>
<dbReference type="InParanoid" id="P31061"/>
<dbReference type="OrthoDB" id="5875302at2"/>
<dbReference type="PhylomeDB" id="P31061"/>
<dbReference type="BioCyc" id="EcoCyc:EG11634-MONOMER"/>
<dbReference type="PRO" id="PR:P31061"/>
<dbReference type="Proteomes" id="UP000000625">
    <property type="component" value="Chromosome"/>
</dbReference>
<dbReference type="Gene3D" id="1.10.10.10">
    <property type="entry name" value="Winged helix-like DNA-binding domain superfamily/Winged helix DNA-binding domain"/>
    <property type="match status" value="1"/>
</dbReference>
<dbReference type="InterPro" id="IPR009061">
    <property type="entry name" value="DNA-bd_dom_put_sf"/>
</dbReference>
<dbReference type="InterPro" id="IPR010906">
    <property type="entry name" value="Phage_lambda_Nu1_terminase-ssu"/>
</dbReference>
<dbReference type="InterPro" id="IPR036388">
    <property type="entry name" value="WH-like_DNA-bd_sf"/>
</dbReference>
<dbReference type="Pfam" id="PF07471">
    <property type="entry name" value="Phage_Nu1"/>
    <property type="match status" value="1"/>
</dbReference>
<dbReference type="SUPFAM" id="SSF46955">
    <property type="entry name" value="Putative DNA-binding domain"/>
    <property type="match status" value="1"/>
</dbReference>
<gene>
    <name type="primary">nohA</name>
    <name type="synonym">nohQ</name>
    <name type="ordered locus">b1548</name>
    <name type="ordered locus">JW1541</name>
</gene>
<name>NOHA_ECOLI</name>
<keyword id="KW-1185">Reference proteome</keyword>
<organism>
    <name type="scientific">Escherichia coli (strain K12)</name>
    <dbReference type="NCBI Taxonomy" id="83333"/>
    <lineage>
        <taxon>Bacteria</taxon>
        <taxon>Pseudomonadati</taxon>
        <taxon>Pseudomonadota</taxon>
        <taxon>Gammaproteobacteria</taxon>
        <taxon>Enterobacterales</taxon>
        <taxon>Enterobacteriaceae</taxon>
        <taxon>Escherichia</taxon>
    </lineage>
</organism>
<comment type="induction">
    <text evidence="1">Regulated by the Fur protein.</text>
</comment>
<comment type="miscellaneous">
    <text evidence="2">Encoded in the Qin prophage.</text>
</comment>
<comment type="similarity">
    <text evidence="2">Belongs to the terminase small subunit family.</text>
</comment>
<protein>
    <recommendedName>
        <fullName evidence="2">Prophage DNA-packing protein NohA</fullName>
    </recommendedName>
    <alternativeName>
        <fullName>Prophage Qin DNA-packaging protein Nu1 homolog</fullName>
    </alternativeName>
</protein>
<proteinExistence type="evidence at transcript level"/>
<accession>P31061</accession>
<accession>A0A385XJH6</accession>
<accession>P77152</accession>